<name>SDS3_PONAB</name>
<gene>
    <name type="primary">SUDS3</name>
    <name type="synonym">SDS3</name>
</gene>
<reference key="1">
    <citation type="submission" date="2004-11" db="EMBL/GenBank/DDBJ databases">
        <authorList>
            <consortium name="The German cDNA consortium"/>
        </authorList>
    </citation>
    <scope>NUCLEOTIDE SEQUENCE [LARGE SCALE MRNA]</scope>
    <source>
        <tissue>Brain cortex</tissue>
    </source>
</reference>
<evidence type="ECO:0000250" key="1"/>
<evidence type="ECO:0000250" key="2">
    <source>
        <dbReference type="UniProtKB" id="Q9H7L9"/>
    </source>
</evidence>
<evidence type="ECO:0000255" key="3"/>
<evidence type="ECO:0000256" key="4">
    <source>
        <dbReference type="SAM" id="MobiDB-lite"/>
    </source>
</evidence>
<evidence type="ECO:0000305" key="5"/>
<keyword id="KW-0007">Acetylation</keyword>
<keyword id="KW-0053">Apoptosis</keyword>
<keyword id="KW-0156">Chromatin regulator</keyword>
<keyword id="KW-0175">Coiled coil</keyword>
<keyword id="KW-1017">Isopeptide bond</keyword>
<keyword id="KW-0539">Nucleus</keyword>
<keyword id="KW-0597">Phosphoprotein</keyword>
<keyword id="KW-1185">Reference proteome</keyword>
<keyword id="KW-0678">Repressor</keyword>
<keyword id="KW-0804">Transcription</keyword>
<keyword id="KW-0805">Transcription regulation</keyword>
<keyword id="KW-0832">Ubl conjugation</keyword>
<sequence>MSAAGLLAPAPAQAGAPPAPEYYPEEDEELESAEEDERSCRGRESDEDTEDASETDLAKHDEEDYVEMKEQMYQDKLASLKRQLQQLQEGTLQEYQKRMKKLDQQYKERIRNAELFLQLETEQVERNYIKEKKAAVKEFEDKKVELKENLIAELEEKKKMIENEKLTMELTGDSMEVKPIMTRKLRRRPNDPVPIPDKRRKPAPAQLNYLLTDEQIMEDLRTLNKLKSPKRPASPSSPEHLPATPAESPAQRFEARIEDGKLYYDKRWYHKSQAIYLESKDNQKLSCVISSVGANEIWVRKTSDSTKMRIYLGQLQRGLFVIRRRSAA</sequence>
<proteinExistence type="evidence at transcript level"/>
<dbReference type="EMBL" id="CR858733">
    <property type="protein sequence ID" value="CAH90942.1"/>
    <property type="molecule type" value="mRNA"/>
</dbReference>
<dbReference type="RefSeq" id="NP_001125541.1">
    <property type="nucleotide sequence ID" value="NM_001132069.1"/>
</dbReference>
<dbReference type="SMR" id="Q5RBB8"/>
<dbReference type="FunCoup" id="Q5RBB8">
    <property type="interactions" value="4435"/>
</dbReference>
<dbReference type="STRING" id="9601.ENSPPYP00000005714"/>
<dbReference type="GeneID" id="100172453"/>
<dbReference type="KEGG" id="pon:100172453"/>
<dbReference type="CTD" id="64426"/>
<dbReference type="eggNOG" id="KOG4466">
    <property type="taxonomic scope" value="Eukaryota"/>
</dbReference>
<dbReference type="InParanoid" id="Q5RBB8"/>
<dbReference type="OrthoDB" id="70376at2759"/>
<dbReference type="Proteomes" id="UP000001595">
    <property type="component" value="Unplaced"/>
</dbReference>
<dbReference type="GO" id="GO:0005654">
    <property type="term" value="C:nucleoplasm"/>
    <property type="evidence" value="ECO:0007669"/>
    <property type="project" value="UniProtKB-ARBA"/>
</dbReference>
<dbReference type="GO" id="GO:0005634">
    <property type="term" value="C:nucleus"/>
    <property type="evidence" value="ECO:0000250"/>
    <property type="project" value="UniProtKB"/>
</dbReference>
<dbReference type="GO" id="GO:0006915">
    <property type="term" value="P:apoptotic process"/>
    <property type="evidence" value="ECO:0007669"/>
    <property type="project" value="UniProtKB-KW"/>
</dbReference>
<dbReference type="GO" id="GO:0006338">
    <property type="term" value="P:chromatin remodeling"/>
    <property type="evidence" value="ECO:0000250"/>
    <property type="project" value="UniProtKB"/>
</dbReference>
<dbReference type="InterPro" id="IPR013907">
    <property type="entry name" value="Sds3"/>
</dbReference>
<dbReference type="PANTHER" id="PTHR21964">
    <property type="entry name" value="BREAST CANCER METASTASIS-SUPPRESSOR 1"/>
    <property type="match status" value="1"/>
</dbReference>
<dbReference type="Pfam" id="PF08598">
    <property type="entry name" value="Sds3"/>
    <property type="match status" value="1"/>
</dbReference>
<dbReference type="SMART" id="SM01401">
    <property type="entry name" value="Sds3"/>
    <property type="match status" value="1"/>
</dbReference>
<accession>Q5RBB8</accession>
<protein>
    <recommendedName>
        <fullName>Sin3 histone deacetylase corepressor complex component SDS3</fullName>
    </recommendedName>
    <alternativeName>
        <fullName>Suppressor of defective silencing 3 protein homolog</fullName>
    </alternativeName>
</protein>
<feature type="initiator methionine" description="Removed" evidence="2">
    <location>
        <position position="1"/>
    </location>
</feature>
<feature type="chain" id="PRO_0000290582" description="Sin3 histone deacetylase corepressor complex component SDS3">
    <location>
        <begin position="2"/>
        <end position="328"/>
    </location>
</feature>
<feature type="region of interest" description="Disordered" evidence="4">
    <location>
        <begin position="1"/>
        <end position="65"/>
    </location>
</feature>
<feature type="region of interest" description="Mediates interaction with USP17L2" evidence="1">
    <location>
        <begin position="2"/>
        <end position="170"/>
    </location>
</feature>
<feature type="region of interest" description="Sin3 interaction domain (SID)">
    <location>
        <begin position="188"/>
        <end position="226"/>
    </location>
</feature>
<feature type="region of interest" description="Disordered" evidence="4">
    <location>
        <begin position="226"/>
        <end position="252"/>
    </location>
</feature>
<feature type="coiled-coil region" evidence="3">
    <location>
        <begin position="66"/>
        <end position="171"/>
    </location>
</feature>
<feature type="compositionally biased region" description="Low complexity" evidence="4">
    <location>
        <begin position="1"/>
        <end position="16"/>
    </location>
</feature>
<feature type="compositionally biased region" description="Acidic residues" evidence="4">
    <location>
        <begin position="23"/>
        <end position="37"/>
    </location>
</feature>
<feature type="compositionally biased region" description="Acidic residues" evidence="4">
    <location>
        <begin position="45"/>
        <end position="54"/>
    </location>
</feature>
<feature type="compositionally biased region" description="Basic and acidic residues" evidence="4">
    <location>
        <begin position="56"/>
        <end position="65"/>
    </location>
</feature>
<feature type="modified residue" description="N-acetylserine" evidence="2">
    <location>
        <position position="2"/>
    </location>
</feature>
<feature type="modified residue" description="Phosphoserine" evidence="2">
    <location>
        <position position="32"/>
    </location>
</feature>
<feature type="modified residue" description="Phosphoserine" evidence="2">
    <location>
        <position position="45"/>
    </location>
</feature>
<feature type="modified residue" description="Phosphothreonine" evidence="2">
    <location>
        <position position="49"/>
    </location>
</feature>
<feature type="modified residue" description="Phosphoserine" evidence="2">
    <location>
        <position position="53"/>
    </location>
</feature>
<feature type="modified residue" description="Phosphoserine" evidence="2">
    <location>
        <position position="228"/>
    </location>
</feature>
<feature type="modified residue" description="Phosphoserine" evidence="2">
    <location>
        <position position="234"/>
    </location>
</feature>
<feature type="modified residue" description="Phosphoserine" evidence="2">
    <location>
        <position position="237"/>
    </location>
</feature>
<feature type="modified residue" description="Phosphothreonine" evidence="2">
    <location>
        <position position="244"/>
    </location>
</feature>
<feature type="cross-link" description="Glycyl lysine isopeptide (Lys-Gly) (interchain with G-Cter in SUMO2)" evidence="2">
    <location>
        <position position="69"/>
    </location>
</feature>
<feature type="cross-link" description="Glycyl lysine isopeptide (Lys-Gly) (interchain with G-Cter in SUMO2)" evidence="2">
    <location>
        <position position="178"/>
    </location>
</feature>
<feature type="cross-link" description="Glycyl lysine isopeptide (Lys-Gly) (interchain with G-Cter in SUMO2)" evidence="2">
    <location>
        <position position="201"/>
    </location>
</feature>
<organism>
    <name type="scientific">Pongo abelii</name>
    <name type="common">Sumatran orangutan</name>
    <name type="synonym">Pongo pygmaeus abelii</name>
    <dbReference type="NCBI Taxonomy" id="9601"/>
    <lineage>
        <taxon>Eukaryota</taxon>
        <taxon>Metazoa</taxon>
        <taxon>Chordata</taxon>
        <taxon>Craniata</taxon>
        <taxon>Vertebrata</taxon>
        <taxon>Euteleostomi</taxon>
        <taxon>Mammalia</taxon>
        <taxon>Eutheria</taxon>
        <taxon>Euarchontoglires</taxon>
        <taxon>Primates</taxon>
        <taxon>Haplorrhini</taxon>
        <taxon>Catarrhini</taxon>
        <taxon>Hominidae</taxon>
        <taxon>Pongo</taxon>
    </lineage>
</organism>
<comment type="function">
    <text evidence="2">Regulatory protein which represses transcription and augments histone deacetylase activity of HDAC1. May have a potential role in tumor suppressor pathways through regulation of apoptosis. May function in the assembly and/or enzymatic activity of the mSin3A corepressor complex or in mediating interactions between the complex and other regulatory complexes (By similarity).</text>
</comment>
<comment type="subunit">
    <text evidence="2">Interacts with HCFC1. Homodimer. Component of the SIN3 histone deacetylase (HDAC) corepressor complex. Interacts with SIN3A. Interaction with SIN3B enhances the interaction between SIN3B and HDAC1 to form a complex. Component of a mSin3A corepressor complex that contains SIN3A, SAP130, SUDS3/SAP45, ARID4B/SAP180, HDAC1 and HDAC2. Interacts with USP17L2; the interaction is direct (By similarity). Interacts with FOXK2 (By similarity).</text>
</comment>
<comment type="subcellular location">
    <subcellularLocation>
        <location evidence="2">Nucleus</location>
    </subcellularLocation>
</comment>
<comment type="domain">
    <text evidence="2">The C-terminus is involved in transcriptional repression by HDAC-independent mechanisms.</text>
</comment>
<comment type="PTM">
    <text evidence="2">Polyubiquitinated. 'Lys-63'-polyubiquitinated SUDS3 positively regulates histone deacetylation. Regulated through deubiquitination by USP17L2/USP17 that cleaves 'Lys-63'-linked ubiquitin chains (By similarity).</text>
</comment>
<comment type="similarity">
    <text evidence="5">Belongs to the SDS3 family.</text>
</comment>